<organism>
    <name type="scientific">Chloroflexus aggregans (strain MD-66 / DSM 9485)</name>
    <dbReference type="NCBI Taxonomy" id="326427"/>
    <lineage>
        <taxon>Bacteria</taxon>
        <taxon>Bacillati</taxon>
        <taxon>Chloroflexota</taxon>
        <taxon>Chloroflexia</taxon>
        <taxon>Chloroflexales</taxon>
        <taxon>Chloroflexineae</taxon>
        <taxon>Chloroflexaceae</taxon>
        <taxon>Chloroflexus</taxon>
    </lineage>
</organism>
<name>RS8_CHLAD</name>
<protein>
    <recommendedName>
        <fullName evidence="1">Small ribosomal subunit protein uS8</fullName>
    </recommendedName>
    <alternativeName>
        <fullName evidence="2">30S ribosomal protein S8</fullName>
    </alternativeName>
</protein>
<comment type="function">
    <text evidence="1">One of the primary rRNA binding proteins, it binds directly to 16S rRNA central domain where it helps coordinate assembly of the platform of the 30S subunit.</text>
</comment>
<comment type="subunit">
    <text evidence="1">Part of the 30S ribosomal subunit. Contacts proteins S5 and S12.</text>
</comment>
<comment type="similarity">
    <text evidence="1">Belongs to the universal ribosomal protein uS8 family.</text>
</comment>
<gene>
    <name evidence="1" type="primary">rpsH</name>
    <name type="ordered locus">Cagg_3010</name>
</gene>
<sequence length="133" mass="14899">MSVNDPIGDMLTRIRNACMARHTTVTMPASKMKIAIADILKREGFIRDYTVIDDGKPYKTISITLKYMPDRRPAITGLRRVSKPGLRVYTKRADIPRVRGGLGLSILSTPKGVLADHEAWRARVGGEVLCYVW</sequence>
<accession>B8G6R1</accession>
<reference key="1">
    <citation type="submission" date="2008-12" db="EMBL/GenBank/DDBJ databases">
        <title>Complete sequence of Chloroflexus aggregans DSM 9485.</title>
        <authorList>
            <consortium name="US DOE Joint Genome Institute"/>
            <person name="Lucas S."/>
            <person name="Copeland A."/>
            <person name="Lapidus A."/>
            <person name="Glavina del Rio T."/>
            <person name="Dalin E."/>
            <person name="Tice H."/>
            <person name="Pitluck S."/>
            <person name="Foster B."/>
            <person name="Larimer F."/>
            <person name="Land M."/>
            <person name="Hauser L."/>
            <person name="Kyrpides N."/>
            <person name="Mikhailova N."/>
            <person name="Bryant D.A."/>
            <person name="Richardson P."/>
        </authorList>
    </citation>
    <scope>NUCLEOTIDE SEQUENCE [LARGE SCALE GENOMIC DNA]</scope>
    <source>
        <strain>MD-66 / DSM 9485</strain>
    </source>
</reference>
<proteinExistence type="inferred from homology"/>
<evidence type="ECO:0000255" key="1">
    <source>
        <dbReference type="HAMAP-Rule" id="MF_01302"/>
    </source>
</evidence>
<evidence type="ECO:0000305" key="2"/>
<keyword id="KW-0687">Ribonucleoprotein</keyword>
<keyword id="KW-0689">Ribosomal protein</keyword>
<keyword id="KW-0694">RNA-binding</keyword>
<keyword id="KW-0699">rRNA-binding</keyword>
<feature type="chain" id="PRO_1000165318" description="Small ribosomal subunit protein uS8">
    <location>
        <begin position="1"/>
        <end position="133"/>
    </location>
</feature>
<dbReference type="EMBL" id="CP001337">
    <property type="protein sequence ID" value="ACL25870.1"/>
    <property type="molecule type" value="Genomic_DNA"/>
</dbReference>
<dbReference type="RefSeq" id="WP_015941724.1">
    <property type="nucleotide sequence ID" value="NC_011831.1"/>
</dbReference>
<dbReference type="SMR" id="B8G6R1"/>
<dbReference type="STRING" id="326427.Cagg_3010"/>
<dbReference type="KEGG" id="cag:Cagg_3010"/>
<dbReference type="eggNOG" id="COG0096">
    <property type="taxonomic scope" value="Bacteria"/>
</dbReference>
<dbReference type="HOGENOM" id="CLU_098428_0_2_0"/>
<dbReference type="OrthoDB" id="9802617at2"/>
<dbReference type="Proteomes" id="UP000002508">
    <property type="component" value="Chromosome"/>
</dbReference>
<dbReference type="GO" id="GO:1990904">
    <property type="term" value="C:ribonucleoprotein complex"/>
    <property type="evidence" value="ECO:0007669"/>
    <property type="project" value="UniProtKB-KW"/>
</dbReference>
<dbReference type="GO" id="GO:0005840">
    <property type="term" value="C:ribosome"/>
    <property type="evidence" value="ECO:0007669"/>
    <property type="project" value="UniProtKB-KW"/>
</dbReference>
<dbReference type="GO" id="GO:0019843">
    <property type="term" value="F:rRNA binding"/>
    <property type="evidence" value="ECO:0007669"/>
    <property type="project" value="UniProtKB-UniRule"/>
</dbReference>
<dbReference type="GO" id="GO:0003735">
    <property type="term" value="F:structural constituent of ribosome"/>
    <property type="evidence" value="ECO:0007669"/>
    <property type="project" value="InterPro"/>
</dbReference>
<dbReference type="GO" id="GO:0006412">
    <property type="term" value="P:translation"/>
    <property type="evidence" value="ECO:0007669"/>
    <property type="project" value="UniProtKB-UniRule"/>
</dbReference>
<dbReference type="FunFam" id="3.30.1370.30:FF:000002">
    <property type="entry name" value="30S ribosomal protein S8"/>
    <property type="match status" value="1"/>
</dbReference>
<dbReference type="FunFam" id="3.30.1490.10:FF:000001">
    <property type="entry name" value="30S ribosomal protein S8"/>
    <property type="match status" value="1"/>
</dbReference>
<dbReference type="Gene3D" id="3.30.1370.30">
    <property type="match status" value="1"/>
</dbReference>
<dbReference type="Gene3D" id="3.30.1490.10">
    <property type="match status" value="1"/>
</dbReference>
<dbReference type="HAMAP" id="MF_01302_B">
    <property type="entry name" value="Ribosomal_uS8_B"/>
    <property type="match status" value="1"/>
</dbReference>
<dbReference type="InterPro" id="IPR000630">
    <property type="entry name" value="Ribosomal_uS8"/>
</dbReference>
<dbReference type="InterPro" id="IPR035987">
    <property type="entry name" value="Ribosomal_uS8_sf"/>
</dbReference>
<dbReference type="NCBIfam" id="NF001109">
    <property type="entry name" value="PRK00136.1"/>
    <property type="match status" value="1"/>
</dbReference>
<dbReference type="PANTHER" id="PTHR11758">
    <property type="entry name" value="40S RIBOSOMAL PROTEIN S15A"/>
    <property type="match status" value="1"/>
</dbReference>
<dbReference type="Pfam" id="PF00410">
    <property type="entry name" value="Ribosomal_S8"/>
    <property type="match status" value="1"/>
</dbReference>
<dbReference type="SUPFAM" id="SSF56047">
    <property type="entry name" value="Ribosomal protein S8"/>
    <property type="match status" value="1"/>
</dbReference>